<protein>
    <recommendedName>
        <fullName evidence="1">Pyridoxine/pyridoxamine 5'-phosphate oxidase</fullName>
        <ecNumber evidence="1">1.4.3.5</ecNumber>
    </recommendedName>
    <alternativeName>
        <fullName evidence="1">PNP/PMP oxidase</fullName>
        <shortName evidence="1">PNPOx</shortName>
    </alternativeName>
    <alternativeName>
        <fullName evidence="1">Pyridoxal 5'-phosphate synthase</fullName>
    </alternativeName>
</protein>
<organism>
    <name type="scientific">Porphyromonas gingivalis (strain ATCC BAA-308 / W83)</name>
    <dbReference type="NCBI Taxonomy" id="242619"/>
    <lineage>
        <taxon>Bacteria</taxon>
        <taxon>Pseudomonadati</taxon>
        <taxon>Bacteroidota</taxon>
        <taxon>Bacteroidia</taxon>
        <taxon>Bacteroidales</taxon>
        <taxon>Porphyromonadaceae</taxon>
        <taxon>Porphyromonas</taxon>
    </lineage>
</organism>
<accession>Q7MU50</accession>
<keyword id="KW-0285">Flavoprotein</keyword>
<keyword id="KW-0288">FMN</keyword>
<keyword id="KW-0560">Oxidoreductase</keyword>
<keyword id="KW-0664">Pyridoxine biosynthesis</keyword>
<keyword id="KW-1185">Reference proteome</keyword>
<proteinExistence type="inferred from homology"/>
<evidence type="ECO:0000255" key="1">
    <source>
        <dbReference type="HAMAP-Rule" id="MF_01629"/>
    </source>
</evidence>
<dbReference type="EC" id="1.4.3.5" evidence="1"/>
<dbReference type="EMBL" id="AE015924">
    <property type="protein sequence ID" value="AAQ66723.1"/>
    <property type="molecule type" value="Genomic_DNA"/>
</dbReference>
<dbReference type="RefSeq" id="WP_005875456.1">
    <property type="nucleotide sequence ID" value="NC_002950.2"/>
</dbReference>
<dbReference type="SMR" id="Q7MU50"/>
<dbReference type="STRING" id="242619.PG_1714"/>
<dbReference type="EnsemblBacteria" id="AAQ66723">
    <property type="protein sequence ID" value="AAQ66723"/>
    <property type="gene ID" value="PG_1714"/>
</dbReference>
<dbReference type="KEGG" id="pgi:PG_1714"/>
<dbReference type="eggNOG" id="COG0259">
    <property type="taxonomic scope" value="Bacteria"/>
</dbReference>
<dbReference type="HOGENOM" id="CLU_032263_2_2_10"/>
<dbReference type="UniPathway" id="UPA01068">
    <property type="reaction ID" value="UER00304"/>
</dbReference>
<dbReference type="UniPathway" id="UPA01068">
    <property type="reaction ID" value="UER00305"/>
</dbReference>
<dbReference type="Proteomes" id="UP000000588">
    <property type="component" value="Chromosome"/>
</dbReference>
<dbReference type="GO" id="GO:0010181">
    <property type="term" value="F:FMN binding"/>
    <property type="evidence" value="ECO:0007669"/>
    <property type="project" value="UniProtKB-UniRule"/>
</dbReference>
<dbReference type="GO" id="GO:0004733">
    <property type="term" value="F:pyridoxamine phosphate oxidase activity"/>
    <property type="evidence" value="ECO:0007669"/>
    <property type="project" value="UniProtKB-UniRule"/>
</dbReference>
<dbReference type="GO" id="GO:0008615">
    <property type="term" value="P:pyridoxine biosynthetic process"/>
    <property type="evidence" value="ECO:0007669"/>
    <property type="project" value="UniProtKB-KW"/>
</dbReference>
<dbReference type="Gene3D" id="2.30.110.10">
    <property type="entry name" value="Electron Transport, Fmn-binding Protein, Chain A"/>
    <property type="match status" value="1"/>
</dbReference>
<dbReference type="HAMAP" id="MF_01629">
    <property type="entry name" value="PdxH"/>
    <property type="match status" value="1"/>
</dbReference>
<dbReference type="InterPro" id="IPR000659">
    <property type="entry name" value="Pyridox_Oxase"/>
</dbReference>
<dbReference type="InterPro" id="IPR019740">
    <property type="entry name" value="Pyridox_Oxase_CS"/>
</dbReference>
<dbReference type="InterPro" id="IPR011576">
    <property type="entry name" value="Pyridox_Oxase_N"/>
</dbReference>
<dbReference type="InterPro" id="IPR019576">
    <property type="entry name" value="Pyridoxamine_oxidase_dimer_C"/>
</dbReference>
<dbReference type="InterPro" id="IPR012349">
    <property type="entry name" value="Split_barrel_FMN-bd"/>
</dbReference>
<dbReference type="NCBIfam" id="TIGR00558">
    <property type="entry name" value="pdxH"/>
    <property type="match status" value="1"/>
</dbReference>
<dbReference type="NCBIfam" id="NF004231">
    <property type="entry name" value="PRK05679.1"/>
    <property type="match status" value="1"/>
</dbReference>
<dbReference type="PANTHER" id="PTHR10851:SF0">
    <property type="entry name" value="PYRIDOXINE-5'-PHOSPHATE OXIDASE"/>
    <property type="match status" value="1"/>
</dbReference>
<dbReference type="PANTHER" id="PTHR10851">
    <property type="entry name" value="PYRIDOXINE-5-PHOSPHATE OXIDASE"/>
    <property type="match status" value="1"/>
</dbReference>
<dbReference type="Pfam" id="PF10590">
    <property type="entry name" value="PNP_phzG_C"/>
    <property type="match status" value="1"/>
</dbReference>
<dbReference type="Pfam" id="PF01243">
    <property type="entry name" value="PNPOx_N"/>
    <property type="match status" value="1"/>
</dbReference>
<dbReference type="PIRSF" id="PIRSF000190">
    <property type="entry name" value="Pyd_amn-ph_oxd"/>
    <property type="match status" value="1"/>
</dbReference>
<dbReference type="SUPFAM" id="SSF50475">
    <property type="entry name" value="FMN-binding split barrel"/>
    <property type="match status" value="1"/>
</dbReference>
<dbReference type="PROSITE" id="PS01064">
    <property type="entry name" value="PYRIDOX_OXIDASE"/>
    <property type="match status" value="1"/>
</dbReference>
<comment type="function">
    <text evidence="1">Catalyzes the oxidation of either pyridoxine 5'-phosphate (PNP) or pyridoxamine 5'-phosphate (PMP) into pyridoxal 5'-phosphate (PLP).</text>
</comment>
<comment type="catalytic activity">
    <reaction evidence="1">
        <text>pyridoxamine 5'-phosphate + O2 + H2O = pyridoxal 5'-phosphate + H2O2 + NH4(+)</text>
        <dbReference type="Rhea" id="RHEA:15817"/>
        <dbReference type="ChEBI" id="CHEBI:15377"/>
        <dbReference type="ChEBI" id="CHEBI:15379"/>
        <dbReference type="ChEBI" id="CHEBI:16240"/>
        <dbReference type="ChEBI" id="CHEBI:28938"/>
        <dbReference type="ChEBI" id="CHEBI:58451"/>
        <dbReference type="ChEBI" id="CHEBI:597326"/>
        <dbReference type="EC" id="1.4.3.5"/>
    </reaction>
</comment>
<comment type="catalytic activity">
    <reaction evidence="1">
        <text>pyridoxine 5'-phosphate + O2 = pyridoxal 5'-phosphate + H2O2</text>
        <dbReference type="Rhea" id="RHEA:15149"/>
        <dbReference type="ChEBI" id="CHEBI:15379"/>
        <dbReference type="ChEBI" id="CHEBI:16240"/>
        <dbReference type="ChEBI" id="CHEBI:58589"/>
        <dbReference type="ChEBI" id="CHEBI:597326"/>
        <dbReference type="EC" id="1.4.3.5"/>
    </reaction>
</comment>
<comment type="cofactor">
    <cofactor evidence="1">
        <name>FMN</name>
        <dbReference type="ChEBI" id="CHEBI:58210"/>
    </cofactor>
    <text evidence="1">Binds 1 FMN per subunit.</text>
</comment>
<comment type="pathway">
    <text evidence="1">Cofactor metabolism; pyridoxal 5'-phosphate salvage; pyridoxal 5'-phosphate from pyridoxamine 5'-phosphate: step 1/1.</text>
</comment>
<comment type="pathway">
    <text evidence="1">Cofactor metabolism; pyridoxal 5'-phosphate salvage; pyridoxal 5'-phosphate from pyridoxine 5'-phosphate: step 1/1.</text>
</comment>
<comment type="subunit">
    <text evidence="1">Homodimer.</text>
</comment>
<comment type="similarity">
    <text evidence="1">Belongs to the pyridoxamine 5'-phosphate oxidase family.</text>
</comment>
<sequence>MDLHFENIRREYDKRSLSASDLTPTPFDLVTRWLQDAVEAKTYEPTAVIVGTATPDGHPSTRTVLLKEFMNNEFIFYSNYESRKGQQMAANPHVCLTFLWHELERQIHVEGDVRILEPELSDAYFATRPYKSRVGARISPQSRPIPGRSFIVQEFMKESLKYAGRTVPRPDTWGGFAVKPVRIEFWQGRESRLHDRFLYELRPDASWSVHRLAP</sequence>
<reference key="1">
    <citation type="journal article" date="2003" name="J. Bacteriol.">
        <title>Complete genome sequence of the oral pathogenic bacterium Porphyromonas gingivalis strain W83.</title>
        <authorList>
            <person name="Nelson K.E."/>
            <person name="Fleischmann R.D."/>
            <person name="DeBoy R.T."/>
            <person name="Paulsen I.T."/>
            <person name="Fouts D.E."/>
            <person name="Eisen J.A."/>
            <person name="Daugherty S.C."/>
            <person name="Dodson R.J."/>
            <person name="Durkin A.S."/>
            <person name="Gwinn M.L."/>
            <person name="Haft D.H."/>
            <person name="Kolonay J.F."/>
            <person name="Nelson W.C."/>
            <person name="Mason T.M."/>
            <person name="Tallon L."/>
            <person name="Gray J."/>
            <person name="Granger D."/>
            <person name="Tettelin H."/>
            <person name="Dong H."/>
            <person name="Galvin J.L."/>
            <person name="Duncan M.J."/>
            <person name="Dewhirst F.E."/>
            <person name="Fraser C.M."/>
        </authorList>
    </citation>
    <scope>NUCLEOTIDE SEQUENCE [LARGE SCALE GENOMIC DNA]</scope>
    <source>
        <strain>ATCC BAA-308 / W83</strain>
    </source>
</reference>
<gene>
    <name evidence="1" type="primary">pdxH</name>
    <name type="ordered locus">PG_1714</name>
</gene>
<feature type="chain" id="PRO_0000167733" description="Pyridoxine/pyridoxamine 5'-phosphate oxidase">
    <location>
        <begin position="1"/>
        <end position="214"/>
    </location>
</feature>
<feature type="binding site" evidence="1">
    <location>
        <begin position="9"/>
        <end position="12"/>
    </location>
    <ligand>
        <name>substrate</name>
    </ligand>
</feature>
<feature type="binding site" evidence="1">
    <location>
        <begin position="62"/>
        <end position="67"/>
    </location>
    <ligand>
        <name>FMN</name>
        <dbReference type="ChEBI" id="CHEBI:58210"/>
    </ligand>
</feature>
<feature type="binding site" evidence="1">
    <location>
        <position position="67"/>
    </location>
    <ligand>
        <name>substrate</name>
    </ligand>
</feature>
<feature type="binding site" evidence="1">
    <location>
        <begin position="77"/>
        <end position="78"/>
    </location>
    <ligand>
        <name>FMN</name>
        <dbReference type="ChEBI" id="CHEBI:58210"/>
    </ligand>
</feature>
<feature type="binding site" evidence="1">
    <location>
        <position position="83"/>
    </location>
    <ligand>
        <name>FMN</name>
        <dbReference type="ChEBI" id="CHEBI:58210"/>
    </ligand>
</feature>
<feature type="binding site" evidence="1">
    <location>
        <position position="84"/>
    </location>
    <ligand>
        <name>FMN</name>
        <dbReference type="ChEBI" id="CHEBI:58210"/>
    </ligand>
</feature>
<feature type="binding site" evidence="1">
    <location>
        <position position="106"/>
    </location>
    <ligand>
        <name>FMN</name>
        <dbReference type="ChEBI" id="CHEBI:58210"/>
    </ligand>
</feature>
<feature type="binding site" evidence="1">
    <location>
        <position position="124"/>
    </location>
    <ligand>
        <name>substrate</name>
    </ligand>
</feature>
<feature type="binding site" evidence="1">
    <location>
        <position position="128"/>
    </location>
    <ligand>
        <name>substrate</name>
    </ligand>
</feature>
<feature type="binding site" evidence="1">
    <location>
        <position position="132"/>
    </location>
    <ligand>
        <name>substrate</name>
    </ligand>
</feature>
<feature type="binding site" evidence="1">
    <location>
        <begin position="141"/>
        <end position="142"/>
    </location>
    <ligand>
        <name>FMN</name>
        <dbReference type="ChEBI" id="CHEBI:58210"/>
    </ligand>
</feature>
<feature type="binding site" evidence="1">
    <location>
        <position position="186"/>
    </location>
    <ligand>
        <name>FMN</name>
        <dbReference type="ChEBI" id="CHEBI:58210"/>
    </ligand>
</feature>
<feature type="binding site" evidence="1">
    <location>
        <begin position="192"/>
        <end position="194"/>
    </location>
    <ligand>
        <name>substrate</name>
    </ligand>
</feature>
<feature type="binding site" evidence="1">
    <location>
        <position position="196"/>
    </location>
    <ligand>
        <name>FMN</name>
        <dbReference type="ChEBI" id="CHEBI:58210"/>
    </ligand>
</feature>
<name>PDXH_PORGI</name>